<sequence>MVAKLEQLIAQTILQGFDAQYGRFLEVTAGAQHRFEQADWHAVQQAMKKRIHLYDHHVGLVVEQLKYITDQRHFDVEFLARVKEIYTGLLPDYPRFEIAESFFNSVYCRLFKHRDLTPDKLFVFSSQPERRFREIPRPLARDFIPKGDLSGMLQMVLNDLSLRLHWENLSRDIDYIVMAIRQAFTDEQLASAHFQIANELFYRNKAAWLVGKLRLNGDIYPFLLPIHHNESGELFIDTCLTSKAEASIVFGFARSYFMVYVPLPAAMVEWLREILPGKSTAELYTAIGCQKHGKTESYREYLAFIHQSSEQFIIAPGVKGMVMLVFTLPSFDRVFKVIKDQFAPQKEVTQARVLECYQLVKEHDRVGRMADTQEYENFVIDKHRISPELLAELQHEVPEKLEDLGDKIVIKHLYMERRMTPLNLYMEQADDQQLKDAIEEYGNAIKQLAAANIFPGDMLFKNFGVTRHGRVVFYDYDEICYMTEVNFRDIPPPRYPEDEMASEPWYSVSPNDVFPEEFRHFLCSDRKVRHFFEEMHGDLFQASYWRGLQQRIRDGHVEDVFAYRRKQRFSQRALN</sequence>
<name>ACEK_YERPE</name>
<proteinExistence type="inferred from homology"/>
<protein>
    <recommendedName>
        <fullName evidence="1">Isocitrate dehydrogenase kinase/phosphatase</fullName>
        <shortName evidence="1">IDH kinase/phosphatase</shortName>
        <shortName evidence="1">IDHK/P</shortName>
        <ecNumber evidence="1">2.7.11.5</ecNumber>
        <ecNumber evidence="1">3.1.3.-</ecNumber>
    </recommendedName>
</protein>
<dbReference type="EC" id="2.7.11.5" evidence="1"/>
<dbReference type="EC" id="3.1.3.-" evidence="1"/>
<dbReference type="EMBL" id="AL590842">
    <property type="protein sequence ID" value="CAL22311.1"/>
    <property type="molecule type" value="Genomic_DNA"/>
</dbReference>
<dbReference type="EMBL" id="AE009952">
    <property type="protein sequence ID" value="AAM83613.1"/>
    <property type="molecule type" value="Genomic_DNA"/>
</dbReference>
<dbReference type="EMBL" id="AE017042">
    <property type="protein sequence ID" value="AAS63256.1"/>
    <property type="molecule type" value="Genomic_DNA"/>
</dbReference>
<dbReference type="PIR" id="AD0453">
    <property type="entry name" value="AD0453"/>
</dbReference>
<dbReference type="RefSeq" id="WP_002212079.1">
    <property type="nucleotide sequence ID" value="NZ_WUCM01000050.1"/>
</dbReference>
<dbReference type="RefSeq" id="YP_002348604.1">
    <property type="nucleotide sequence ID" value="NC_003143.1"/>
</dbReference>
<dbReference type="SMR" id="Q8ZAR7"/>
<dbReference type="STRING" id="214092.YPO3724"/>
<dbReference type="PaxDb" id="214092-YPO3724"/>
<dbReference type="DNASU" id="1144964"/>
<dbReference type="EnsemblBacteria" id="AAS63256">
    <property type="protein sequence ID" value="AAS63256"/>
    <property type="gene ID" value="YP_3086"/>
</dbReference>
<dbReference type="GeneID" id="57974998"/>
<dbReference type="KEGG" id="ype:YPO3724"/>
<dbReference type="KEGG" id="ypj:CH55_2835"/>
<dbReference type="KEGG" id="ypk:y0018"/>
<dbReference type="KEGG" id="ypl:CH46_1362"/>
<dbReference type="KEGG" id="ypm:YP_3086"/>
<dbReference type="KEGG" id="ypv:BZ15_4011"/>
<dbReference type="KEGG" id="ypw:CH59_1637"/>
<dbReference type="PATRIC" id="fig|214092.21.peg.4237"/>
<dbReference type="eggNOG" id="COG4579">
    <property type="taxonomic scope" value="Bacteria"/>
</dbReference>
<dbReference type="HOGENOM" id="CLU_033804_1_1_6"/>
<dbReference type="OMA" id="EPWYSVG"/>
<dbReference type="OrthoDB" id="5287793at2"/>
<dbReference type="Proteomes" id="UP000000815">
    <property type="component" value="Chromosome"/>
</dbReference>
<dbReference type="Proteomes" id="UP000001019">
    <property type="component" value="Chromosome"/>
</dbReference>
<dbReference type="Proteomes" id="UP000002490">
    <property type="component" value="Chromosome"/>
</dbReference>
<dbReference type="GO" id="GO:0005737">
    <property type="term" value="C:cytoplasm"/>
    <property type="evidence" value="ECO:0007669"/>
    <property type="project" value="UniProtKB-SubCell"/>
</dbReference>
<dbReference type="GO" id="GO:0008772">
    <property type="term" value="F:[isocitrate dehydrogenase (NADP+)] kinase activity"/>
    <property type="evidence" value="ECO:0000318"/>
    <property type="project" value="GO_Central"/>
</dbReference>
<dbReference type="GO" id="GO:0016208">
    <property type="term" value="F:AMP binding"/>
    <property type="evidence" value="ECO:0000318"/>
    <property type="project" value="GO_Central"/>
</dbReference>
<dbReference type="GO" id="GO:0005524">
    <property type="term" value="F:ATP binding"/>
    <property type="evidence" value="ECO:0000318"/>
    <property type="project" value="GO_Central"/>
</dbReference>
<dbReference type="GO" id="GO:0004721">
    <property type="term" value="F:phosphoprotein phosphatase activity"/>
    <property type="evidence" value="ECO:0000318"/>
    <property type="project" value="GO_Central"/>
</dbReference>
<dbReference type="GO" id="GO:0004674">
    <property type="term" value="F:protein serine/threonine kinase activity"/>
    <property type="evidence" value="ECO:0007669"/>
    <property type="project" value="UniProtKB-KW"/>
</dbReference>
<dbReference type="GO" id="GO:0006006">
    <property type="term" value="P:glucose metabolic process"/>
    <property type="evidence" value="ECO:0007669"/>
    <property type="project" value="InterPro"/>
</dbReference>
<dbReference type="GO" id="GO:0006097">
    <property type="term" value="P:glyoxylate cycle"/>
    <property type="evidence" value="ECO:0007669"/>
    <property type="project" value="UniProtKB-UniRule"/>
</dbReference>
<dbReference type="GO" id="GO:0006099">
    <property type="term" value="P:tricarboxylic acid cycle"/>
    <property type="evidence" value="ECO:0007669"/>
    <property type="project" value="UniProtKB-UniRule"/>
</dbReference>
<dbReference type="HAMAP" id="MF_00747">
    <property type="entry name" value="AceK"/>
    <property type="match status" value="1"/>
</dbReference>
<dbReference type="InterPro" id="IPR046855">
    <property type="entry name" value="AceK_kinase"/>
</dbReference>
<dbReference type="InterPro" id="IPR046854">
    <property type="entry name" value="AceK_regulatory"/>
</dbReference>
<dbReference type="InterPro" id="IPR010452">
    <property type="entry name" value="Isocitrate_DH_AceK"/>
</dbReference>
<dbReference type="NCBIfam" id="NF002804">
    <property type="entry name" value="PRK02946.1"/>
    <property type="match status" value="1"/>
</dbReference>
<dbReference type="PANTHER" id="PTHR39559">
    <property type="match status" value="1"/>
</dbReference>
<dbReference type="PANTHER" id="PTHR39559:SF1">
    <property type="entry name" value="ISOCITRATE DEHYDROGENASE KINASE_PHOSPHATASE"/>
    <property type="match status" value="1"/>
</dbReference>
<dbReference type="Pfam" id="PF06315">
    <property type="entry name" value="AceK_kinase"/>
    <property type="match status" value="1"/>
</dbReference>
<dbReference type="Pfam" id="PF20423">
    <property type="entry name" value="AceK_regulatory"/>
    <property type="match status" value="1"/>
</dbReference>
<dbReference type="PIRSF" id="PIRSF000719">
    <property type="entry name" value="AceK"/>
    <property type="match status" value="1"/>
</dbReference>
<feature type="chain" id="PRO_0000057912" description="Isocitrate dehydrogenase kinase/phosphatase">
    <location>
        <begin position="1"/>
        <end position="575"/>
    </location>
</feature>
<feature type="active site" evidence="1">
    <location>
        <position position="371"/>
    </location>
</feature>
<feature type="binding site" evidence="1">
    <location>
        <begin position="315"/>
        <end position="321"/>
    </location>
    <ligand>
        <name>ATP</name>
        <dbReference type="ChEBI" id="CHEBI:30616"/>
    </ligand>
</feature>
<feature type="binding site" evidence="1">
    <location>
        <position position="336"/>
    </location>
    <ligand>
        <name>ATP</name>
        <dbReference type="ChEBI" id="CHEBI:30616"/>
    </ligand>
</feature>
<organism>
    <name type="scientific">Yersinia pestis</name>
    <dbReference type="NCBI Taxonomy" id="632"/>
    <lineage>
        <taxon>Bacteria</taxon>
        <taxon>Pseudomonadati</taxon>
        <taxon>Pseudomonadota</taxon>
        <taxon>Gammaproteobacteria</taxon>
        <taxon>Enterobacterales</taxon>
        <taxon>Yersiniaceae</taxon>
        <taxon>Yersinia</taxon>
    </lineage>
</organism>
<comment type="function">
    <text evidence="1">Bifunctional enzyme which can phosphorylate or dephosphorylate isocitrate dehydrogenase (IDH) on a specific serine residue. This is a regulatory mechanism which enables bacteria to bypass the Krebs cycle via the glyoxylate shunt in response to the source of carbon. When bacteria are grown on glucose, IDH is fully active and unphosphorylated, but when grown on acetate or ethanol, the activity of IDH declines drastically concomitant with its phosphorylation.</text>
</comment>
<comment type="catalytic activity">
    <reaction evidence="1">
        <text>L-seryl-[isocitrate dehydrogenase] + ATP = O-phospho-L-seryl-[isocitrate dehydrogenase] + ADP + H(+)</text>
        <dbReference type="Rhea" id="RHEA:43540"/>
        <dbReference type="Rhea" id="RHEA-COMP:10605"/>
        <dbReference type="Rhea" id="RHEA-COMP:10606"/>
        <dbReference type="ChEBI" id="CHEBI:15378"/>
        <dbReference type="ChEBI" id="CHEBI:29999"/>
        <dbReference type="ChEBI" id="CHEBI:30616"/>
        <dbReference type="ChEBI" id="CHEBI:83421"/>
        <dbReference type="ChEBI" id="CHEBI:456216"/>
        <dbReference type="EC" id="2.7.11.5"/>
    </reaction>
</comment>
<comment type="subcellular location">
    <subcellularLocation>
        <location evidence="1">Cytoplasm</location>
    </subcellularLocation>
</comment>
<comment type="similarity">
    <text evidence="1">Belongs to the AceK family.</text>
</comment>
<keyword id="KW-0067">ATP-binding</keyword>
<keyword id="KW-0963">Cytoplasm</keyword>
<keyword id="KW-0329">Glyoxylate bypass</keyword>
<keyword id="KW-0378">Hydrolase</keyword>
<keyword id="KW-0418">Kinase</keyword>
<keyword id="KW-0547">Nucleotide-binding</keyword>
<keyword id="KW-0904">Protein phosphatase</keyword>
<keyword id="KW-1185">Reference proteome</keyword>
<keyword id="KW-0723">Serine/threonine-protein kinase</keyword>
<keyword id="KW-0808">Transferase</keyword>
<keyword id="KW-0816">Tricarboxylic acid cycle</keyword>
<gene>
    <name evidence="1" type="primary">aceK</name>
    <name type="ordered locus">YPO3724</name>
    <name type="ordered locus">y0018</name>
    <name type="ordered locus">YP_3086</name>
</gene>
<reference key="1">
    <citation type="journal article" date="2001" name="Nature">
        <title>Genome sequence of Yersinia pestis, the causative agent of plague.</title>
        <authorList>
            <person name="Parkhill J."/>
            <person name="Wren B.W."/>
            <person name="Thomson N.R."/>
            <person name="Titball R.W."/>
            <person name="Holden M.T.G."/>
            <person name="Prentice M.B."/>
            <person name="Sebaihia M."/>
            <person name="James K.D."/>
            <person name="Churcher C.M."/>
            <person name="Mungall K.L."/>
            <person name="Baker S."/>
            <person name="Basham D."/>
            <person name="Bentley S.D."/>
            <person name="Brooks K."/>
            <person name="Cerdeno-Tarraga A.-M."/>
            <person name="Chillingworth T."/>
            <person name="Cronin A."/>
            <person name="Davies R.M."/>
            <person name="Davis P."/>
            <person name="Dougan G."/>
            <person name="Feltwell T."/>
            <person name="Hamlin N."/>
            <person name="Holroyd S."/>
            <person name="Jagels K."/>
            <person name="Karlyshev A.V."/>
            <person name="Leather S."/>
            <person name="Moule S."/>
            <person name="Oyston P.C.F."/>
            <person name="Quail M.A."/>
            <person name="Rutherford K.M."/>
            <person name="Simmonds M."/>
            <person name="Skelton J."/>
            <person name="Stevens K."/>
            <person name="Whitehead S."/>
            <person name="Barrell B.G."/>
        </authorList>
    </citation>
    <scope>NUCLEOTIDE SEQUENCE [LARGE SCALE GENOMIC DNA]</scope>
    <source>
        <strain>CO-92 / Biovar Orientalis</strain>
    </source>
</reference>
<reference key="2">
    <citation type="journal article" date="2002" name="J. Bacteriol.">
        <title>Genome sequence of Yersinia pestis KIM.</title>
        <authorList>
            <person name="Deng W."/>
            <person name="Burland V."/>
            <person name="Plunkett G. III"/>
            <person name="Boutin A."/>
            <person name="Mayhew G.F."/>
            <person name="Liss P."/>
            <person name="Perna N.T."/>
            <person name="Rose D.J."/>
            <person name="Mau B."/>
            <person name="Zhou S."/>
            <person name="Schwartz D.C."/>
            <person name="Fetherston J.D."/>
            <person name="Lindler L.E."/>
            <person name="Brubaker R.R."/>
            <person name="Plano G.V."/>
            <person name="Straley S.C."/>
            <person name="McDonough K.A."/>
            <person name="Nilles M.L."/>
            <person name="Matson J.S."/>
            <person name="Blattner F.R."/>
            <person name="Perry R.D."/>
        </authorList>
    </citation>
    <scope>NUCLEOTIDE SEQUENCE [LARGE SCALE GENOMIC DNA]</scope>
    <source>
        <strain>KIM10+ / Biovar Mediaevalis</strain>
    </source>
</reference>
<reference key="3">
    <citation type="journal article" date="2004" name="DNA Res.">
        <title>Complete genome sequence of Yersinia pestis strain 91001, an isolate avirulent to humans.</title>
        <authorList>
            <person name="Song Y."/>
            <person name="Tong Z."/>
            <person name="Wang J."/>
            <person name="Wang L."/>
            <person name="Guo Z."/>
            <person name="Han Y."/>
            <person name="Zhang J."/>
            <person name="Pei D."/>
            <person name="Zhou D."/>
            <person name="Qin H."/>
            <person name="Pang X."/>
            <person name="Han Y."/>
            <person name="Zhai J."/>
            <person name="Li M."/>
            <person name="Cui B."/>
            <person name="Qi Z."/>
            <person name="Jin L."/>
            <person name="Dai R."/>
            <person name="Chen F."/>
            <person name="Li S."/>
            <person name="Ye C."/>
            <person name="Du Z."/>
            <person name="Lin W."/>
            <person name="Wang J."/>
            <person name="Yu J."/>
            <person name="Yang H."/>
            <person name="Wang J."/>
            <person name="Huang P."/>
            <person name="Yang R."/>
        </authorList>
    </citation>
    <scope>NUCLEOTIDE SEQUENCE [LARGE SCALE GENOMIC DNA]</scope>
    <source>
        <strain>91001 / Biovar Mediaevalis</strain>
    </source>
</reference>
<evidence type="ECO:0000255" key="1">
    <source>
        <dbReference type="HAMAP-Rule" id="MF_00747"/>
    </source>
</evidence>
<accession>Q8ZAR7</accession>
<accession>Q0WAT4</accession>